<keyword id="KW-1185">Reference proteome</keyword>
<keyword id="KW-0687">Ribonucleoprotein</keyword>
<keyword id="KW-0689">Ribosomal protein</keyword>
<keyword id="KW-0694">RNA-binding</keyword>
<keyword id="KW-0699">rRNA-binding</keyword>
<comment type="function">
    <text evidence="1">Located on the platform of the 30S subunit, it bridges several disparate RNA helices of the 16S rRNA. Forms part of the Shine-Dalgarno cleft in the 70S ribosome.</text>
</comment>
<comment type="subunit">
    <text evidence="1">Part of the 30S ribosomal subunit. Interacts with proteins S7 and S18. Binds to IF-3.</text>
</comment>
<comment type="similarity">
    <text evidence="1">Belongs to the universal ribosomal protein uS11 family.</text>
</comment>
<sequence length="129" mass="13775">MAKEPARVKRRERKNITSGVAHVNASFNNTMITITDAQGNTISWSSAGMMGFKGSRKSTPYAAQMAAEDAGKKAAEHGVKTLEVNVSGPGSGRESALRALQAAGMTITTIRDVTPIPHNGCRPPKRRRV</sequence>
<dbReference type="EMBL" id="CP001340">
    <property type="protein sequence ID" value="ACL94794.1"/>
    <property type="molecule type" value="Genomic_DNA"/>
</dbReference>
<dbReference type="RefSeq" id="WP_010919150.1">
    <property type="nucleotide sequence ID" value="NC_011916.1"/>
</dbReference>
<dbReference type="RefSeq" id="YP_002516702.1">
    <property type="nucleotide sequence ID" value="NC_011916.1"/>
</dbReference>
<dbReference type="SMR" id="B8H4F7"/>
<dbReference type="GeneID" id="7331784"/>
<dbReference type="KEGG" id="ccs:CCNA_01329"/>
<dbReference type="PATRIC" id="fig|565050.3.peg.1313"/>
<dbReference type="HOGENOM" id="CLU_072439_5_0_5"/>
<dbReference type="OrthoDB" id="9806415at2"/>
<dbReference type="PhylomeDB" id="B8H4F7"/>
<dbReference type="Proteomes" id="UP000001364">
    <property type="component" value="Chromosome"/>
</dbReference>
<dbReference type="GO" id="GO:1990904">
    <property type="term" value="C:ribonucleoprotein complex"/>
    <property type="evidence" value="ECO:0007669"/>
    <property type="project" value="UniProtKB-KW"/>
</dbReference>
<dbReference type="GO" id="GO:0005840">
    <property type="term" value="C:ribosome"/>
    <property type="evidence" value="ECO:0007669"/>
    <property type="project" value="UniProtKB-KW"/>
</dbReference>
<dbReference type="GO" id="GO:0019843">
    <property type="term" value="F:rRNA binding"/>
    <property type="evidence" value="ECO:0007669"/>
    <property type="project" value="UniProtKB-UniRule"/>
</dbReference>
<dbReference type="GO" id="GO:0003735">
    <property type="term" value="F:structural constituent of ribosome"/>
    <property type="evidence" value="ECO:0007669"/>
    <property type="project" value="InterPro"/>
</dbReference>
<dbReference type="GO" id="GO:0006412">
    <property type="term" value="P:translation"/>
    <property type="evidence" value="ECO:0007669"/>
    <property type="project" value="UniProtKB-UniRule"/>
</dbReference>
<dbReference type="FunFam" id="3.30.420.80:FF:000001">
    <property type="entry name" value="30S ribosomal protein S11"/>
    <property type="match status" value="1"/>
</dbReference>
<dbReference type="Gene3D" id="3.30.420.80">
    <property type="entry name" value="Ribosomal protein S11"/>
    <property type="match status" value="1"/>
</dbReference>
<dbReference type="HAMAP" id="MF_01310">
    <property type="entry name" value="Ribosomal_uS11"/>
    <property type="match status" value="1"/>
</dbReference>
<dbReference type="InterPro" id="IPR001971">
    <property type="entry name" value="Ribosomal_uS11"/>
</dbReference>
<dbReference type="InterPro" id="IPR019981">
    <property type="entry name" value="Ribosomal_uS11_bac-type"/>
</dbReference>
<dbReference type="InterPro" id="IPR018102">
    <property type="entry name" value="Ribosomal_uS11_CS"/>
</dbReference>
<dbReference type="InterPro" id="IPR036967">
    <property type="entry name" value="Ribosomal_uS11_sf"/>
</dbReference>
<dbReference type="NCBIfam" id="NF003698">
    <property type="entry name" value="PRK05309.1"/>
    <property type="match status" value="1"/>
</dbReference>
<dbReference type="NCBIfam" id="TIGR03632">
    <property type="entry name" value="uS11_bact"/>
    <property type="match status" value="1"/>
</dbReference>
<dbReference type="PANTHER" id="PTHR11759">
    <property type="entry name" value="40S RIBOSOMAL PROTEIN S14/30S RIBOSOMAL PROTEIN S11"/>
    <property type="match status" value="1"/>
</dbReference>
<dbReference type="Pfam" id="PF00411">
    <property type="entry name" value="Ribosomal_S11"/>
    <property type="match status" value="1"/>
</dbReference>
<dbReference type="PIRSF" id="PIRSF002131">
    <property type="entry name" value="Ribosomal_S11"/>
    <property type="match status" value="1"/>
</dbReference>
<dbReference type="SUPFAM" id="SSF53137">
    <property type="entry name" value="Translational machinery components"/>
    <property type="match status" value="1"/>
</dbReference>
<dbReference type="PROSITE" id="PS00054">
    <property type="entry name" value="RIBOSOMAL_S11"/>
    <property type="match status" value="1"/>
</dbReference>
<reference key="1">
    <citation type="journal article" date="2010" name="J. Bacteriol.">
        <title>The genetic basis of laboratory adaptation in Caulobacter crescentus.</title>
        <authorList>
            <person name="Marks M.E."/>
            <person name="Castro-Rojas C.M."/>
            <person name="Teiling C."/>
            <person name="Du L."/>
            <person name="Kapatral V."/>
            <person name="Walunas T.L."/>
            <person name="Crosson S."/>
        </authorList>
    </citation>
    <scope>NUCLEOTIDE SEQUENCE [LARGE SCALE GENOMIC DNA]</scope>
    <source>
        <strain>NA1000 / CB15N</strain>
    </source>
</reference>
<proteinExistence type="inferred from homology"/>
<evidence type="ECO:0000255" key="1">
    <source>
        <dbReference type="HAMAP-Rule" id="MF_01310"/>
    </source>
</evidence>
<evidence type="ECO:0000305" key="2"/>
<feature type="chain" id="PRO_1000165538" description="Small ribosomal subunit protein uS11">
    <location>
        <begin position="1"/>
        <end position="129"/>
    </location>
</feature>
<organism>
    <name type="scientific">Caulobacter vibrioides (strain NA1000 / CB15N)</name>
    <name type="common">Caulobacter crescentus</name>
    <dbReference type="NCBI Taxonomy" id="565050"/>
    <lineage>
        <taxon>Bacteria</taxon>
        <taxon>Pseudomonadati</taxon>
        <taxon>Pseudomonadota</taxon>
        <taxon>Alphaproteobacteria</taxon>
        <taxon>Caulobacterales</taxon>
        <taxon>Caulobacteraceae</taxon>
        <taxon>Caulobacter</taxon>
    </lineage>
</organism>
<accession>B8H4F7</accession>
<gene>
    <name evidence="1" type="primary">rpsK</name>
    <name type="ordered locus">CCNA_01329</name>
</gene>
<protein>
    <recommendedName>
        <fullName evidence="1">Small ribosomal subunit protein uS11</fullName>
    </recommendedName>
    <alternativeName>
        <fullName evidence="2">30S ribosomal protein S11</fullName>
    </alternativeName>
</protein>
<name>RS11_CAUVN</name>